<keyword id="KW-0028">Amino-acid biosynthesis</keyword>
<keyword id="KW-0100">Branched-chain amino acid biosynthesis</keyword>
<keyword id="KW-0432">Leucine biosynthesis</keyword>
<keyword id="KW-0456">Lyase</keyword>
<comment type="function">
    <text evidence="1">Catalyzes the isomerization between 2-isopropylmalate and 3-isopropylmalate, via the formation of 2-isopropylmaleate.</text>
</comment>
<comment type="catalytic activity">
    <reaction evidence="1">
        <text>(2R,3S)-3-isopropylmalate = (2S)-2-isopropylmalate</text>
        <dbReference type="Rhea" id="RHEA:32287"/>
        <dbReference type="ChEBI" id="CHEBI:1178"/>
        <dbReference type="ChEBI" id="CHEBI:35121"/>
        <dbReference type="EC" id="4.2.1.33"/>
    </reaction>
</comment>
<comment type="pathway">
    <text evidence="1">Amino-acid biosynthesis; L-leucine biosynthesis; L-leucine from 3-methyl-2-oxobutanoate: step 2/4.</text>
</comment>
<comment type="subunit">
    <text evidence="1">Heterodimer of LeuC and LeuD.</text>
</comment>
<comment type="similarity">
    <text evidence="1">Belongs to the LeuD family. LeuD type 1 subfamily.</text>
</comment>
<protein>
    <recommendedName>
        <fullName evidence="1">3-isopropylmalate dehydratase small subunit</fullName>
        <ecNumber evidence="1">4.2.1.33</ecNumber>
    </recommendedName>
    <alternativeName>
        <fullName evidence="1">Alpha-IPM isomerase</fullName>
        <shortName evidence="1">IPMI</shortName>
    </alternativeName>
    <alternativeName>
        <fullName evidence="1">Isopropylmalate isomerase</fullName>
    </alternativeName>
</protein>
<dbReference type="EC" id="4.2.1.33" evidence="1"/>
<dbReference type="EMBL" id="CP000463">
    <property type="protein sequence ID" value="ABJ04298.1"/>
    <property type="molecule type" value="Genomic_DNA"/>
</dbReference>
<dbReference type="SMR" id="Q07UT6"/>
<dbReference type="STRING" id="316055.RPE_0339"/>
<dbReference type="KEGG" id="rpe:RPE_0339"/>
<dbReference type="eggNOG" id="COG0066">
    <property type="taxonomic scope" value="Bacteria"/>
</dbReference>
<dbReference type="HOGENOM" id="CLU_081378_0_3_5"/>
<dbReference type="OrthoDB" id="9777465at2"/>
<dbReference type="UniPathway" id="UPA00048">
    <property type="reaction ID" value="UER00071"/>
</dbReference>
<dbReference type="GO" id="GO:0009316">
    <property type="term" value="C:3-isopropylmalate dehydratase complex"/>
    <property type="evidence" value="ECO:0007669"/>
    <property type="project" value="InterPro"/>
</dbReference>
<dbReference type="GO" id="GO:0003861">
    <property type="term" value="F:3-isopropylmalate dehydratase activity"/>
    <property type="evidence" value="ECO:0007669"/>
    <property type="project" value="UniProtKB-UniRule"/>
</dbReference>
<dbReference type="GO" id="GO:0009098">
    <property type="term" value="P:L-leucine biosynthetic process"/>
    <property type="evidence" value="ECO:0007669"/>
    <property type="project" value="UniProtKB-UniRule"/>
</dbReference>
<dbReference type="CDD" id="cd01577">
    <property type="entry name" value="IPMI_Swivel"/>
    <property type="match status" value="1"/>
</dbReference>
<dbReference type="FunFam" id="3.20.19.10:FF:000003">
    <property type="entry name" value="3-isopropylmalate dehydratase small subunit"/>
    <property type="match status" value="1"/>
</dbReference>
<dbReference type="Gene3D" id="3.20.19.10">
    <property type="entry name" value="Aconitase, domain 4"/>
    <property type="match status" value="1"/>
</dbReference>
<dbReference type="HAMAP" id="MF_01031">
    <property type="entry name" value="LeuD_type1"/>
    <property type="match status" value="1"/>
</dbReference>
<dbReference type="InterPro" id="IPR004431">
    <property type="entry name" value="3-IsopropMal_deHydase_ssu"/>
</dbReference>
<dbReference type="InterPro" id="IPR015928">
    <property type="entry name" value="Aconitase/3IPM_dehydase_swvl"/>
</dbReference>
<dbReference type="InterPro" id="IPR000573">
    <property type="entry name" value="AconitaseA/IPMdHydase_ssu_swvl"/>
</dbReference>
<dbReference type="InterPro" id="IPR033940">
    <property type="entry name" value="IPMI_Swivel"/>
</dbReference>
<dbReference type="InterPro" id="IPR050075">
    <property type="entry name" value="LeuD"/>
</dbReference>
<dbReference type="NCBIfam" id="TIGR00171">
    <property type="entry name" value="leuD"/>
    <property type="match status" value="1"/>
</dbReference>
<dbReference type="NCBIfam" id="NF002458">
    <property type="entry name" value="PRK01641.1"/>
    <property type="match status" value="1"/>
</dbReference>
<dbReference type="PANTHER" id="PTHR43345:SF5">
    <property type="entry name" value="3-ISOPROPYLMALATE DEHYDRATASE SMALL SUBUNIT"/>
    <property type="match status" value="1"/>
</dbReference>
<dbReference type="PANTHER" id="PTHR43345">
    <property type="entry name" value="3-ISOPROPYLMALATE DEHYDRATASE SMALL SUBUNIT 2-RELATED-RELATED"/>
    <property type="match status" value="1"/>
</dbReference>
<dbReference type="Pfam" id="PF00694">
    <property type="entry name" value="Aconitase_C"/>
    <property type="match status" value="1"/>
</dbReference>
<dbReference type="SUPFAM" id="SSF52016">
    <property type="entry name" value="LeuD/IlvD-like"/>
    <property type="match status" value="1"/>
</dbReference>
<evidence type="ECO:0000255" key="1">
    <source>
        <dbReference type="HAMAP-Rule" id="MF_01031"/>
    </source>
</evidence>
<proteinExistence type="inferred from homology"/>
<organism>
    <name type="scientific">Rhodopseudomonas palustris (strain BisA53)</name>
    <dbReference type="NCBI Taxonomy" id="316055"/>
    <lineage>
        <taxon>Bacteria</taxon>
        <taxon>Pseudomonadati</taxon>
        <taxon>Pseudomonadota</taxon>
        <taxon>Alphaproteobacteria</taxon>
        <taxon>Hyphomicrobiales</taxon>
        <taxon>Nitrobacteraceae</taxon>
        <taxon>Rhodopseudomonas</taxon>
    </lineage>
</organism>
<accession>Q07UT6</accession>
<reference key="1">
    <citation type="submission" date="2006-09" db="EMBL/GenBank/DDBJ databases">
        <title>Complete sequence of Rhodopseudomonas palustris BisA53.</title>
        <authorList>
            <consortium name="US DOE Joint Genome Institute"/>
            <person name="Copeland A."/>
            <person name="Lucas S."/>
            <person name="Lapidus A."/>
            <person name="Barry K."/>
            <person name="Detter J.C."/>
            <person name="Glavina del Rio T."/>
            <person name="Hammon N."/>
            <person name="Israni S."/>
            <person name="Dalin E."/>
            <person name="Tice H."/>
            <person name="Pitluck S."/>
            <person name="Chain P."/>
            <person name="Malfatti S."/>
            <person name="Shin M."/>
            <person name="Vergez L."/>
            <person name="Schmutz J."/>
            <person name="Larimer F."/>
            <person name="Land M."/>
            <person name="Hauser L."/>
            <person name="Pelletier D.A."/>
            <person name="Kyrpides N."/>
            <person name="Kim E."/>
            <person name="Harwood C.S."/>
            <person name="Oda Y."/>
            <person name="Richardson P."/>
        </authorList>
    </citation>
    <scope>NUCLEOTIDE SEQUENCE [LARGE SCALE GENOMIC DNA]</scope>
    <source>
        <strain>BisA53</strain>
    </source>
</reference>
<name>LEUD_RHOP5</name>
<feature type="chain" id="PRO_1000063816" description="3-isopropylmalate dehydratase small subunit">
    <location>
        <begin position="1"/>
        <end position="201"/>
    </location>
</feature>
<sequence length="201" mass="22293">MDKFTTLEGVAAPLKIINVDTDMIIPKQYLKTIKRTGLGKGLFSEQRYNDDGSENPDFILNKPAYRGAKILVAGDNFGCGSSREHAPWALLDFGIRCVISTSFGDIFYNNCFKNGVLPIRVEQADLDRLFDDAERGSNATVTIDLPNQEIRGPDGGTVKFEIDPFRKHCLINGLDDIGLTLEKKASIDSYEAKAKTERAWA</sequence>
<gene>
    <name evidence="1" type="primary">leuD</name>
    <name type="ordered locus">RPE_0339</name>
</gene>